<name>CYB6_ORYSA</name>
<protein>
    <recommendedName>
        <fullName evidence="1">Cytochrome b6</fullName>
    </recommendedName>
</protein>
<sequence length="215" mass="24183">MSKVYDWFEERLEIQAIADDITSKYVPPHVNIFYCLGGITLTCFLVQVATGFAMTFYYRPTVTEAFSSVQYIMTEANFGWLIRSVHRWSASMMVLMMILHVFRVYLTGGFKKPRELTWVTGVVLAVLTASFGVTGYSLPWDQIGYWAVKIVTGVPDAIPVIGSPLVELLRGSASVGQSTLTRFYSLHTFVLPLLTAVFMLMHFLMIRKQGISGPL</sequence>
<evidence type="ECO:0000255" key="1">
    <source>
        <dbReference type="HAMAP-Rule" id="MF_00633"/>
    </source>
</evidence>
<reference key="1">
    <citation type="journal article" date="2004" name="Plant Physiol.">
        <title>A comparison of rice chloroplast genomes.</title>
        <authorList>
            <person name="Tang J."/>
            <person name="Xia H."/>
            <person name="Cao M."/>
            <person name="Zhang X."/>
            <person name="Zeng W."/>
            <person name="Hu S."/>
            <person name="Tong W."/>
            <person name="Wang J."/>
            <person name="Wang J."/>
            <person name="Yu J."/>
            <person name="Yang H."/>
            <person name="Zhu L."/>
        </authorList>
    </citation>
    <scope>NUCLEOTIDE SEQUENCE [LARGE SCALE GENOMIC DNA]</scope>
    <source>
        <strain>cv. PA64s</strain>
    </source>
</reference>
<geneLocation type="chloroplast"/>
<keyword id="KW-0150">Chloroplast</keyword>
<keyword id="KW-0249">Electron transport</keyword>
<keyword id="KW-0349">Heme</keyword>
<keyword id="KW-0408">Iron</keyword>
<keyword id="KW-0472">Membrane</keyword>
<keyword id="KW-0479">Metal-binding</keyword>
<keyword id="KW-0602">Photosynthesis</keyword>
<keyword id="KW-0934">Plastid</keyword>
<keyword id="KW-0793">Thylakoid</keyword>
<keyword id="KW-0812">Transmembrane</keyword>
<keyword id="KW-1133">Transmembrane helix</keyword>
<keyword id="KW-0813">Transport</keyword>
<proteinExistence type="inferred from homology"/>
<feature type="chain" id="PRO_0000288628" description="Cytochrome b6">
    <location>
        <begin position="1"/>
        <end position="215"/>
    </location>
</feature>
<feature type="transmembrane region" description="Helical" evidence="1">
    <location>
        <begin position="32"/>
        <end position="52"/>
    </location>
</feature>
<feature type="transmembrane region" description="Helical" evidence="1">
    <location>
        <begin position="90"/>
        <end position="110"/>
    </location>
</feature>
<feature type="transmembrane region" description="Helical" evidence="1">
    <location>
        <begin position="116"/>
        <end position="136"/>
    </location>
</feature>
<feature type="transmembrane region" description="Helical" evidence="1">
    <location>
        <begin position="186"/>
        <end position="206"/>
    </location>
</feature>
<feature type="binding site" description="covalent" evidence="1">
    <location>
        <position position="35"/>
    </location>
    <ligand>
        <name>heme c</name>
        <dbReference type="ChEBI" id="CHEBI:61717"/>
    </ligand>
</feature>
<feature type="binding site" description="axial binding residue" evidence="1">
    <location>
        <position position="86"/>
    </location>
    <ligand>
        <name>heme b</name>
        <dbReference type="ChEBI" id="CHEBI:60344"/>
        <label>2</label>
    </ligand>
    <ligandPart>
        <name>Fe</name>
        <dbReference type="ChEBI" id="CHEBI:18248"/>
    </ligandPart>
</feature>
<feature type="binding site" description="axial binding residue" evidence="1">
    <location>
        <position position="100"/>
    </location>
    <ligand>
        <name>heme b</name>
        <dbReference type="ChEBI" id="CHEBI:60344"/>
        <label>1</label>
    </ligand>
    <ligandPart>
        <name>Fe</name>
        <dbReference type="ChEBI" id="CHEBI:18248"/>
    </ligandPart>
</feature>
<feature type="binding site" description="axial binding residue" evidence="1">
    <location>
        <position position="187"/>
    </location>
    <ligand>
        <name>heme b</name>
        <dbReference type="ChEBI" id="CHEBI:60344"/>
        <label>2</label>
    </ligand>
    <ligandPart>
        <name>Fe</name>
        <dbReference type="ChEBI" id="CHEBI:18248"/>
    </ligandPart>
</feature>
<feature type="binding site" description="axial binding residue" evidence="1">
    <location>
        <position position="202"/>
    </location>
    <ligand>
        <name>heme b</name>
        <dbReference type="ChEBI" id="CHEBI:60344"/>
        <label>1</label>
    </ligand>
    <ligandPart>
        <name>Fe</name>
        <dbReference type="ChEBI" id="CHEBI:18248"/>
    </ligandPart>
</feature>
<comment type="function">
    <text evidence="1">Component of the cytochrome b6-f complex, which mediates electron transfer between photosystem II (PSII) and photosystem I (PSI), cyclic electron flow around PSI, and state transitions.</text>
</comment>
<comment type="cofactor">
    <cofactor evidence="1">
        <name>heme b</name>
        <dbReference type="ChEBI" id="CHEBI:60344"/>
    </cofactor>
    <text evidence="1">Binds 2 heme b groups non-covalently with two histidine residues as axial ligands.</text>
</comment>
<comment type="cofactor">
    <cofactor evidence="1">
        <name>heme c</name>
        <dbReference type="ChEBI" id="CHEBI:61717"/>
    </cofactor>
    <text evidence="1">Binds one heme group covalently by a single cysteine link with no axial amino acid ligand. This heme was named heme ci.</text>
</comment>
<comment type="subunit">
    <text evidence="1">The 4 large subunits of the cytochrome b6-f complex are cytochrome b6, subunit IV (17 kDa polypeptide, PetD), cytochrome f and the Rieske protein, while the 4 small subunits are PetG, PetL, PetM and PetN. The complex functions as a dimer.</text>
</comment>
<comment type="subcellular location">
    <subcellularLocation>
        <location evidence="1">Plastid</location>
        <location evidence="1">Chloroplast thylakoid membrane</location>
        <topology evidence="1">Multi-pass membrane protein</topology>
    </subcellularLocation>
</comment>
<comment type="miscellaneous">
    <text evidence="1">Heme 1 (or BH or b566) is high-potential and absorbs at about 566 nm, and heme 2 (or BL or b562) is low-potential and absorbs at about 562 nm.</text>
</comment>
<comment type="similarity">
    <text evidence="1">Belongs to the cytochrome b family. PetB subfamily.</text>
</comment>
<gene>
    <name evidence="1" type="primary">petB</name>
</gene>
<organism>
    <name type="scientific">Oryza sativa</name>
    <name type="common">Rice</name>
    <dbReference type="NCBI Taxonomy" id="4530"/>
    <lineage>
        <taxon>Eukaryota</taxon>
        <taxon>Viridiplantae</taxon>
        <taxon>Streptophyta</taxon>
        <taxon>Embryophyta</taxon>
        <taxon>Tracheophyta</taxon>
        <taxon>Spermatophyta</taxon>
        <taxon>Magnoliopsida</taxon>
        <taxon>Liliopsida</taxon>
        <taxon>Poales</taxon>
        <taxon>Poaceae</taxon>
        <taxon>BOP clade</taxon>
        <taxon>Oryzoideae</taxon>
        <taxon>Oryzeae</taxon>
        <taxon>Oryzinae</taxon>
        <taxon>Oryza</taxon>
    </lineage>
</organism>
<dbReference type="EMBL" id="AY522331">
    <property type="status" value="NOT_ANNOTATED_CDS"/>
    <property type="molecule type" value="Genomic_DNA"/>
</dbReference>
<dbReference type="RefSeq" id="YP_009305333.1">
    <property type="nucleotide sequence ID" value="NC_031333.1"/>
</dbReference>
<dbReference type="SMR" id="P0C315"/>
<dbReference type="GeneID" id="29141401"/>
<dbReference type="GO" id="GO:0009535">
    <property type="term" value="C:chloroplast thylakoid membrane"/>
    <property type="evidence" value="ECO:0007669"/>
    <property type="project" value="UniProtKB-SubCell"/>
</dbReference>
<dbReference type="GO" id="GO:0009536">
    <property type="term" value="C:plastid"/>
    <property type="evidence" value="ECO:0000305"/>
    <property type="project" value="Gramene"/>
</dbReference>
<dbReference type="GO" id="GO:0045158">
    <property type="term" value="F:electron transporter, transferring electrons within cytochrome b6/f complex of photosystem II activity"/>
    <property type="evidence" value="ECO:0007669"/>
    <property type="project" value="UniProtKB-UniRule"/>
</dbReference>
<dbReference type="GO" id="GO:0046872">
    <property type="term" value="F:metal ion binding"/>
    <property type="evidence" value="ECO:0007669"/>
    <property type="project" value="UniProtKB-KW"/>
</dbReference>
<dbReference type="GO" id="GO:0016491">
    <property type="term" value="F:oxidoreductase activity"/>
    <property type="evidence" value="ECO:0007669"/>
    <property type="project" value="InterPro"/>
</dbReference>
<dbReference type="GO" id="GO:0015979">
    <property type="term" value="P:photosynthesis"/>
    <property type="evidence" value="ECO:0007669"/>
    <property type="project" value="UniProtKB-UniRule"/>
</dbReference>
<dbReference type="GO" id="GO:0022904">
    <property type="term" value="P:respiratory electron transport chain"/>
    <property type="evidence" value="ECO:0007669"/>
    <property type="project" value="InterPro"/>
</dbReference>
<dbReference type="CDD" id="cd00284">
    <property type="entry name" value="Cytochrome_b_N"/>
    <property type="match status" value="1"/>
</dbReference>
<dbReference type="FunFam" id="1.20.810.10:FF:000001">
    <property type="entry name" value="Cytochrome b6"/>
    <property type="match status" value="1"/>
</dbReference>
<dbReference type="Gene3D" id="1.20.810.10">
    <property type="entry name" value="Cytochrome Bc1 Complex, Chain C"/>
    <property type="match status" value="1"/>
</dbReference>
<dbReference type="HAMAP" id="MF_00633">
    <property type="entry name" value="Cytb6_f_cytb6"/>
    <property type="match status" value="1"/>
</dbReference>
<dbReference type="InterPro" id="IPR005797">
    <property type="entry name" value="Cyt_b/b6_N"/>
</dbReference>
<dbReference type="InterPro" id="IPR023530">
    <property type="entry name" value="Cyt_B6_PetB"/>
</dbReference>
<dbReference type="InterPro" id="IPR027387">
    <property type="entry name" value="Cytb/b6-like_sf"/>
</dbReference>
<dbReference type="InterPro" id="IPR048259">
    <property type="entry name" value="Cytochrome_b_N_euk/bac"/>
</dbReference>
<dbReference type="InterPro" id="IPR016174">
    <property type="entry name" value="Di-haem_cyt_TM"/>
</dbReference>
<dbReference type="NCBIfam" id="NF002990">
    <property type="entry name" value="PRK03735.1"/>
    <property type="match status" value="1"/>
</dbReference>
<dbReference type="PANTHER" id="PTHR19271">
    <property type="entry name" value="CYTOCHROME B"/>
    <property type="match status" value="1"/>
</dbReference>
<dbReference type="PANTHER" id="PTHR19271:SF16">
    <property type="entry name" value="CYTOCHROME B"/>
    <property type="match status" value="1"/>
</dbReference>
<dbReference type="Pfam" id="PF00033">
    <property type="entry name" value="Cytochrome_B"/>
    <property type="match status" value="1"/>
</dbReference>
<dbReference type="PIRSF" id="PIRSF000032">
    <property type="entry name" value="Cytochrome_b6"/>
    <property type="match status" value="1"/>
</dbReference>
<dbReference type="SUPFAM" id="SSF81342">
    <property type="entry name" value="Transmembrane di-heme cytochromes"/>
    <property type="match status" value="1"/>
</dbReference>
<dbReference type="PROSITE" id="PS51002">
    <property type="entry name" value="CYTB_NTER"/>
    <property type="match status" value="1"/>
</dbReference>
<accession>P0C315</accession>